<keyword id="KW-0067">ATP-binding</keyword>
<keyword id="KW-0963">Cytoplasm</keyword>
<keyword id="KW-0436">Ligase</keyword>
<keyword id="KW-0460">Magnesium</keyword>
<keyword id="KW-0479">Metal-binding</keyword>
<keyword id="KW-0547">Nucleotide-binding</keyword>
<keyword id="KW-0658">Purine biosynthesis</keyword>
<reference key="1">
    <citation type="journal article" date="2007" name="BMC Microbiol.">
        <title>Subtle genetic changes enhance virulence of methicillin resistant and sensitive Staphylococcus aureus.</title>
        <authorList>
            <person name="Highlander S.K."/>
            <person name="Hulten K.G."/>
            <person name="Qin X."/>
            <person name="Jiang H."/>
            <person name="Yerrapragada S."/>
            <person name="Mason E.O. Jr."/>
            <person name="Shang Y."/>
            <person name="Williams T.M."/>
            <person name="Fortunov R.M."/>
            <person name="Liu Y."/>
            <person name="Igboeli O."/>
            <person name="Petrosino J."/>
            <person name="Tirumalai M."/>
            <person name="Uzman A."/>
            <person name="Fox G.E."/>
            <person name="Cardenas A.M."/>
            <person name="Muzny D.M."/>
            <person name="Hemphill L."/>
            <person name="Ding Y."/>
            <person name="Dugan S."/>
            <person name="Blyth P.R."/>
            <person name="Buhay C.J."/>
            <person name="Dinh H.H."/>
            <person name="Hawes A.C."/>
            <person name="Holder M."/>
            <person name="Kovar C.L."/>
            <person name="Lee S.L."/>
            <person name="Liu W."/>
            <person name="Nazareth L.V."/>
            <person name="Wang Q."/>
            <person name="Zhou J."/>
            <person name="Kaplan S.L."/>
            <person name="Weinstock G.M."/>
        </authorList>
    </citation>
    <scope>NUCLEOTIDE SEQUENCE [LARGE SCALE GENOMIC DNA]</scope>
    <source>
        <strain>USA300 / TCH1516</strain>
    </source>
</reference>
<comment type="function">
    <text evidence="1">Part of the phosphoribosylformylglycinamidine synthase complex involved in the purines biosynthetic pathway. Catalyzes the ATP-dependent conversion of formylglycinamide ribonucleotide (FGAR) and glutamine to yield formylglycinamidine ribonucleotide (FGAM) and glutamate. The FGAM synthase complex is composed of three subunits. PurQ produces an ammonia molecule by converting glutamine to glutamate. PurL transfers the ammonia molecule to FGAR to form FGAM in an ATP-dependent manner. PurS interacts with PurQ and PurL and is thought to assist in the transfer of the ammonia molecule from PurQ to PurL.</text>
</comment>
<comment type="catalytic activity">
    <reaction evidence="1">
        <text>N(2)-formyl-N(1)-(5-phospho-beta-D-ribosyl)glycinamide + L-glutamine + ATP + H2O = 2-formamido-N(1)-(5-O-phospho-beta-D-ribosyl)acetamidine + L-glutamate + ADP + phosphate + H(+)</text>
        <dbReference type="Rhea" id="RHEA:17129"/>
        <dbReference type="ChEBI" id="CHEBI:15377"/>
        <dbReference type="ChEBI" id="CHEBI:15378"/>
        <dbReference type="ChEBI" id="CHEBI:29985"/>
        <dbReference type="ChEBI" id="CHEBI:30616"/>
        <dbReference type="ChEBI" id="CHEBI:43474"/>
        <dbReference type="ChEBI" id="CHEBI:58359"/>
        <dbReference type="ChEBI" id="CHEBI:147286"/>
        <dbReference type="ChEBI" id="CHEBI:147287"/>
        <dbReference type="ChEBI" id="CHEBI:456216"/>
        <dbReference type="EC" id="6.3.5.3"/>
    </reaction>
</comment>
<comment type="pathway">
    <text evidence="1">Purine metabolism; IMP biosynthesis via de novo pathway; 5-amino-1-(5-phospho-D-ribosyl)imidazole from N(2)-formyl-N(1)-(5-phospho-D-ribosyl)glycinamide: step 1/2.</text>
</comment>
<comment type="subunit">
    <text evidence="1">Monomer. Part of the FGAM synthase complex composed of 1 PurL, 1 PurQ and 2 PurS subunits.</text>
</comment>
<comment type="subcellular location">
    <subcellularLocation>
        <location evidence="1">Cytoplasm</location>
    </subcellularLocation>
</comment>
<comment type="similarity">
    <text evidence="1">Belongs to the FGAMS family.</text>
</comment>
<gene>
    <name evidence="1" type="primary">purL</name>
    <name type="ordered locus">USA300HOU_1014</name>
</gene>
<dbReference type="EC" id="6.3.5.3" evidence="1"/>
<dbReference type="EMBL" id="CP000730">
    <property type="protein sequence ID" value="ABX29034.1"/>
    <property type="molecule type" value="Genomic_DNA"/>
</dbReference>
<dbReference type="RefSeq" id="WP_000032727.1">
    <property type="nucleotide sequence ID" value="NC_010079.1"/>
</dbReference>
<dbReference type="SMR" id="A8Z1L1"/>
<dbReference type="KEGG" id="sax:USA300HOU_1014"/>
<dbReference type="HOGENOM" id="CLU_003100_0_1_9"/>
<dbReference type="UniPathway" id="UPA00074">
    <property type="reaction ID" value="UER00128"/>
</dbReference>
<dbReference type="GO" id="GO:0005737">
    <property type="term" value="C:cytoplasm"/>
    <property type="evidence" value="ECO:0007669"/>
    <property type="project" value="UniProtKB-SubCell"/>
</dbReference>
<dbReference type="GO" id="GO:0005524">
    <property type="term" value="F:ATP binding"/>
    <property type="evidence" value="ECO:0007669"/>
    <property type="project" value="UniProtKB-UniRule"/>
</dbReference>
<dbReference type="GO" id="GO:0000287">
    <property type="term" value="F:magnesium ion binding"/>
    <property type="evidence" value="ECO:0007669"/>
    <property type="project" value="UniProtKB-UniRule"/>
</dbReference>
<dbReference type="GO" id="GO:0004642">
    <property type="term" value="F:phosphoribosylformylglycinamidine synthase activity"/>
    <property type="evidence" value="ECO:0007669"/>
    <property type="project" value="UniProtKB-UniRule"/>
</dbReference>
<dbReference type="GO" id="GO:0006189">
    <property type="term" value="P:'de novo' IMP biosynthetic process"/>
    <property type="evidence" value="ECO:0007669"/>
    <property type="project" value="UniProtKB-UniRule"/>
</dbReference>
<dbReference type="CDD" id="cd02203">
    <property type="entry name" value="PurL_repeat1"/>
    <property type="match status" value="1"/>
</dbReference>
<dbReference type="CDD" id="cd02204">
    <property type="entry name" value="PurL_repeat2"/>
    <property type="match status" value="1"/>
</dbReference>
<dbReference type="FunFam" id="3.30.1330.10:FF:000004">
    <property type="entry name" value="Phosphoribosylformylglycinamidine synthase subunit PurL"/>
    <property type="match status" value="1"/>
</dbReference>
<dbReference type="Gene3D" id="3.90.650.10">
    <property type="entry name" value="PurM-like C-terminal domain"/>
    <property type="match status" value="2"/>
</dbReference>
<dbReference type="Gene3D" id="3.30.1330.10">
    <property type="entry name" value="PurM-like, N-terminal domain"/>
    <property type="match status" value="2"/>
</dbReference>
<dbReference type="HAMAP" id="MF_00420">
    <property type="entry name" value="PurL_2"/>
    <property type="match status" value="1"/>
</dbReference>
<dbReference type="InterPro" id="IPR010074">
    <property type="entry name" value="PRibForGlyAmidine_synth_PurL"/>
</dbReference>
<dbReference type="InterPro" id="IPR041609">
    <property type="entry name" value="PurL_linker"/>
</dbReference>
<dbReference type="InterPro" id="IPR010918">
    <property type="entry name" value="PurM-like_C_dom"/>
</dbReference>
<dbReference type="InterPro" id="IPR036676">
    <property type="entry name" value="PurM-like_C_sf"/>
</dbReference>
<dbReference type="InterPro" id="IPR016188">
    <property type="entry name" value="PurM-like_N"/>
</dbReference>
<dbReference type="InterPro" id="IPR036921">
    <property type="entry name" value="PurM-like_N_sf"/>
</dbReference>
<dbReference type="NCBIfam" id="TIGR01736">
    <property type="entry name" value="FGAM_synth_II"/>
    <property type="match status" value="1"/>
</dbReference>
<dbReference type="NCBIfam" id="NF002290">
    <property type="entry name" value="PRK01213.1"/>
    <property type="match status" value="1"/>
</dbReference>
<dbReference type="PANTHER" id="PTHR43555">
    <property type="entry name" value="PHOSPHORIBOSYLFORMYLGLYCINAMIDINE SYNTHASE SUBUNIT PURL"/>
    <property type="match status" value="1"/>
</dbReference>
<dbReference type="PANTHER" id="PTHR43555:SF1">
    <property type="entry name" value="PHOSPHORIBOSYLFORMYLGLYCINAMIDINE SYNTHASE SUBUNIT PURL"/>
    <property type="match status" value="1"/>
</dbReference>
<dbReference type="Pfam" id="PF00586">
    <property type="entry name" value="AIRS"/>
    <property type="match status" value="2"/>
</dbReference>
<dbReference type="Pfam" id="PF02769">
    <property type="entry name" value="AIRS_C"/>
    <property type="match status" value="1"/>
</dbReference>
<dbReference type="Pfam" id="PF18072">
    <property type="entry name" value="FGAR-AT_linker"/>
    <property type="match status" value="1"/>
</dbReference>
<dbReference type="PIRSF" id="PIRSF001587">
    <property type="entry name" value="FGAM_synthase_II"/>
    <property type="match status" value="1"/>
</dbReference>
<dbReference type="SUPFAM" id="SSF56042">
    <property type="entry name" value="PurM C-terminal domain-like"/>
    <property type="match status" value="2"/>
</dbReference>
<dbReference type="SUPFAM" id="SSF55326">
    <property type="entry name" value="PurM N-terminal domain-like"/>
    <property type="match status" value="2"/>
</dbReference>
<proteinExistence type="inferred from homology"/>
<organism>
    <name type="scientific">Staphylococcus aureus (strain USA300 / TCH1516)</name>
    <dbReference type="NCBI Taxonomy" id="451516"/>
    <lineage>
        <taxon>Bacteria</taxon>
        <taxon>Bacillati</taxon>
        <taxon>Bacillota</taxon>
        <taxon>Bacilli</taxon>
        <taxon>Bacillales</taxon>
        <taxon>Staphylococcaceae</taxon>
        <taxon>Staphylococcus</taxon>
    </lineage>
</organism>
<sequence length="729" mass="79536">MSKFIEPSVEEIKLEKVYQDMGLSDQEYEKVCDILGRQPNFTETGIFSVMWSEHCSYKHSKPFLKQFPTSGDHVLMGPGEGAGVVDIGDNQAVVFKVESHNHPSAIEPYQGAATGVGGIIRDIVSIGARPINLLNSLRFGELDNKQNQRLLKGVVKGIGGYGNCIGIPTTAGEIEFDERYDGNPLVNAMCVGVINHDMIQKGTAKGVGNSVIYVGLKTGRDGIHGATFASEELTEESESKRPSVQIGDPFVGKKLMEATLEAITFDELVGIQDMGAAGLTSSSSEMAAKGGSGLHLRLEQVPTREPGISPYEMMLSETQERMLLVVEKGTEQKFLDLFDKHELDSAVIGEVTDTNRFVLTYDDEVYADIPVEPLADEAPVYILEGEEKDYNTSKNDYTHIDVKDTFFKLLKHPTIASKHYLYDQYDQQVGANTIIKPGLQASVVRVEGTNKAIASTIDGEARYVYNNPYEGGKMVVAEAYRNLIAVGATPLAMTDCLNYGSPEKKEIYQQLIDSTKGMAEACDILKTPVVSGNVSLYNETKGTSIFPTPVVGMVGLIENVNYLNDFEPQVGDKLYLIGDTKDDFGGSQLEKLIYGKVNHEFESLDLSSEVEKGESIKTAIREGLLSHVQTVGKGGLLITLAKLSAHYGLGLKSSIDITNAQLFSETQGRYVVSVKSGKTLNIDNAIEIGLLTDSDNFKVTTPYTEISENVSDIKQIWEGAIAQCLTTQD</sequence>
<accession>A8Z1L1</accession>
<name>PURL_STAAT</name>
<evidence type="ECO:0000255" key="1">
    <source>
        <dbReference type="HAMAP-Rule" id="MF_00420"/>
    </source>
</evidence>
<feature type="chain" id="PRO_1000080557" description="Phosphoribosylformylglycinamidine synthase subunit PurL">
    <location>
        <begin position="1"/>
        <end position="729"/>
    </location>
</feature>
<feature type="active site" evidence="1">
    <location>
        <position position="54"/>
    </location>
</feature>
<feature type="active site" description="Proton acceptor" evidence="1">
    <location>
        <position position="100"/>
    </location>
</feature>
<feature type="binding site" evidence="1">
    <location>
        <position position="57"/>
    </location>
    <ligand>
        <name>ATP</name>
        <dbReference type="ChEBI" id="CHEBI:30616"/>
    </ligand>
</feature>
<feature type="binding site" evidence="1">
    <location>
        <position position="96"/>
    </location>
    <ligand>
        <name>ATP</name>
        <dbReference type="ChEBI" id="CHEBI:30616"/>
    </ligand>
</feature>
<feature type="binding site" evidence="1">
    <location>
        <position position="98"/>
    </location>
    <ligand>
        <name>Mg(2+)</name>
        <dbReference type="ChEBI" id="CHEBI:18420"/>
        <label>1</label>
    </ligand>
</feature>
<feature type="binding site" evidence="1">
    <location>
        <begin position="99"/>
        <end position="102"/>
    </location>
    <ligand>
        <name>substrate</name>
    </ligand>
</feature>
<feature type="binding site" evidence="1">
    <location>
        <position position="121"/>
    </location>
    <ligand>
        <name>substrate</name>
    </ligand>
</feature>
<feature type="binding site" evidence="1">
    <location>
        <position position="122"/>
    </location>
    <ligand>
        <name>Mg(2+)</name>
        <dbReference type="ChEBI" id="CHEBI:18420"/>
        <label>2</label>
    </ligand>
</feature>
<feature type="binding site" evidence="1">
    <location>
        <position position="245"/>
    </location>
    <ligand>
        <name>substrate</name>
    </ligand>
</feature>
<feature type="binding site" evidence="1">
    <location>
        <position position="273"/>
    </location>
    <ligand>
        <name>Mg(2+)</name>
        <dbReference type="ChEBI" id="CHEBI:18420"/>
        <label>2</label>
    </ligand>
</feature>
<feature type="binding site" evidence="1">
    <location>
        <begin position="317"/>
        <end position="319"/>
    </location>
    <ligand>
        <name>substrate</name>
    </ligand>
</feature>
<feature type="binding site" evidence="1">
    <location>
        <position position="495"/>
    </location>
    <ligand>
        <name>ATP</name>
        <dbReference type="ChEBI" id="CHEBI:30616"/>
    </ligand>
</feature>
<feature type="binding site" evidence="1">
    <location>
        <position position="532"/>
    </location>
    <ligand>
        <name>ATP</name>
        <dbReference type="ChEBI" id="CHEBI:30616"/>
    </ligand>
</feature>
<feature type="binding site" evidence="1">
    <location>
        <position position="533"/>
    </location>
    <ligand>
        <name>Mg(2+)</name>
        <dbReference type="ChEBI" id="CHEBI:18420"/>
        <label>1</label>
    </ligand>
</feature>
<feature type="binding site" evidence="1">
    <location>
        <position position="535"/>
    </location>
    <ligand>
        <name>substrate</name>
    </ligand>
</feature>
<protein>
    <recommendedName>
        <fullName evidence="1">Phosphoribosylformylglycinamidine synthase subunit PurL</fullName>
        <shortName evidence="1">FGAM synthase</shortName>
        <ecNumber evidence="1">6.3.5.3</ecNumber>
    </recommendedName>
    <alternativeName>
        <fullName evidence="1">Formylglycinamide ribonucleotide amidotransferase subunit II</fullName>
        <shortName evidence="1">FGAR amidotransferase II</shortName>
        <shortName evidence="1">FGAR-AT II</shortName>
    </alternativeName>
    <alternativeName>
        <fullName evidence="1">Glutamine amidotransferase PurL</fullName>
    </alternativeName>
    <alternativeName>
        <fullName evidence="1">Phosphoribosylformylglycinamidine synthase subunit II</fullName>
    </alternativeName>
</protein>